<reference evidence="7" key="1">
    <citation type="journal article" date="1998" name="Science">
        <title>Genome sequence of the nematode C. elegans: a platform for investigating biology.</title>
        <authorList>
            <consortium name="The C. elegans sequencing consortium"/>
        </authorList>
    </citation>
    <scope>NUCLEOTIDE SEQUENCE [LARGE SCALE GENOMIC DNA]</scope>
    <source>
        <strain evidence="7">Bristol N2</strain>
    </source>
</reference>
<reference evidence="6" key="2">
    <citation type="journal article" date="2013" name="Development">
        <title>C. elegans PVF-1 inhibits permissive UNC-40 signalling through CED-10 GTPase to position the male ray 1 sensillum.</title>
        <authorList>
            <person name="Dalpe G."/>
            <person name="Tarsitano M."/>
            <person name="Persico M.G."/>
            <person name="Zheng H."/>
            <person name="Culotti J."/>
        </authorList>
    </citation>
    <scope>FUNCTION</scope>
</reference>
<evidence type="ECO:0000255" key="1"/>
<evidence type="ECO:0000255" key="2">
    <source>
        <dbReference type="PROSITE-ProRule" id="PRU00114"/>
    </source>
</evidence>
<evidence type="ECO:0000255" key="3">
    <source>
        <dbReference type="PROSITE-ProRule" id="PRU00159"/>
    </source>
</evidence>
<evidence type="ECO:0000255" key="4">
    <source>
        <dbReference type="PROSITE-ProRule" id="PRU00498"/>
    </source>
</evidence>
<evidence type="ECO:0000269" key="5">
    <source>
    </source>
</evidence>
<evidence type="ECO:0000305" key="6"/>
<evidence type="ECO:0000312" key="7">
    <source>
        <dbReference type="Proteomes" id="UP000001940"/>
    </source>
</evidence>
<evidence type="ECO:0000312" key="8">
    <source>
        <dbReference type="WormBase" id="F59F3.5"/>
    </source>
</evidence>
<organism evidence="7">
    <name type="scientific">Caenorhabditis elegans</name>
    <dbReference type="NCBI Taxonomy" id="6239"/>
    <lineage>
        <taxon>Eukaryota</taxon>
        <taxon>Metazoa</taxon>
        <taxon>Ecdysozoa</taxon>
        <taxon>Nematoda</taxon>
        <taxon>Chromadorea</taxon>
        <taxon>Rhabditida</taxon>
        <taxon>Rhabditina</taxon>
        <taxon>Rhabditomorpha</taxon>
        <taxon>Rhabditoidea</taxon>
        <taxon>Rhabditidae</taxon>
        <taxon>Peloderinae</taxon>
        <taxon>Caenorhabditis</taxon>
    </lineage>
</organism>
<comment type="function">
    <text evidence="5">Receptor tyrosine kinase which may be involved, downstream of pvf-1, in the positioning of ray 1, the most anterior ray sensillum in the male tail.</text>
</comment>
<comment type="catalytic activity">
    <reaction>
        <text>L-tyrosyl-[protein] + ATP = O-phospho-L-tyrosyl-[protein] + ADP + H(+)</text>
        <dbReference type="Rhea" id="RHEA:10596"/>
        <dbReference type="Rhea" id="RHEA-COMP:10136"/>
        <dbReference type="Rhea" id="RHEA-COMP:20101"/>
        <dbReference type="ChEBI" id="CHEBI:15378"/>
        <dbReference type="ChEBI" id="CHEBI:30616"/>
        <dbReference type="ChEBI" id="CHEBI:46858"/>
        <dbReference type="ChEBI" id="CHEBI:61978"/>
        <dbReference type="ChEBI" id="CHEBI:456216"/>
        <dbReference type="EC" id="2.7.10.1"/>
    </reaction>
</comment>
<comment type="subcellular location">
    <subcellularLocation>
        <location evidence="6">Cell membrane</location>
        <topology evidence="6">Single-pass type I membrane protein</topology>
    </subcellularLocation>
</comment>
<comment type="similarity">
    <text evidence="3">Belongs to the protein kinase superfamily. Tyr protein kinase family.</text>
</comment>
<feature type="chain" id="PRO_0000434516" description="Tyrosine-protein kinase receptor ver-4" evidence="6">
    <location>
        <begin position="1"/>
        <end position="1216"/>
    </location>
</feature>
<feature type="topological domain" description="Extracellular" evidence="1">
    <location>
        <begin position="1"/>
        <end position="789"/>
    </location>
</feature>
<feature type="transmembrane region" description="Helical" evidence="1">
    <location>
        <begin position="790"/>
        <end position="810"/>
    </location>
</feature>
<feature type="topological domain" description="Cytoplasmic" evidence="1">
    <location>
        <begin position="811"/>
        <end position="1216"/>
    </location>
</feature>
<feature type="domain" description="Ig-like C2-type 1" evidence="2">
    <location>
        <begin position="596"/>
        <end position="691"/>
    </location>
</feature>
<feature type="domain" description="Ig-like C2-type 2" evidence="2">
    <location>
        <begin position="697"/>
        <end position="783"/>
    </location>
</feature>
<feature type="domain" description="Protein kinase" evidence="3">
    <location>
        <begin position="870"/>
        <end position="1181"/>
    </location>
</feature>
<feature type="active site" description="Proton acceptor" evidence="3">
    <location>
        <position position="1042"/>
    </location>
</feature>
<feature type="binding site" evidence="3">
    <location>
        <begin position="876"/>
        <end position="884"/>
    </location>
    <ligand>
        <name>ATP</name>
        <dbReference type="ChEBI" id="CHEBI:30616"/>
    </ligand>
</feature>
<feature type="binding site" evidence="3">
    <location>
        <position position="908"/>
    </location>
    <ligand>
        <name>ATP</name>
        <dbReference type="ChEBI" id="CHEBI:30616"/>
    </ligand>
</feature>
<feature type="glycosylation site" description="N-linked (GlcNAc...) asparagine" evidence="4">
    <location>
        <position position="142"/>
    </location>
</feature>
<feature type="glycosylation site" description="N-linked (GlcNAc...) asparagine" evidence="4">
    <location>
        <position position="195"/>
    </location>
</feature>
<feature type="glycosylation site" description="N-linked (GlcNAc...) asparagine" evidence="4">
    <location>
        <position position="206"/>
    </location>
</feature>
<feature type="glycosylation site" description="N-linked (GlcNAc...) asparagine" evidence="4">
    <location>
        <position position="245"/>
    </location>
</feature>
<feature type="glycosylation site" description="N-linked (GlcNAc...) asparagine" evidence="4">
    <location>
        <position position="283"/>
    </location>
</feature>
<feature type="glycosylation site" description="N-linked (GlcNAc...) asparagine" evidence="4">
    <location>
        <position position="333"/>
    </location>
</feature>
<feature type="glycosylation site" description="N-linked (GlcNAc...) asparagine" evidence="4">
    <location>
        <position position="348"/>
    </location>
</feature>
<feature type="glycosylation site" description="N-linked (GlcNAc...) asparagine" evidence="4">
    <location>
        <position position="384"/>
    </location>
</feature>
<feature type="glycosylation site" description="N-linked (GlcNAc...) asparagine" evidence="4">
    <location>
        <position position="402"/>
    </location>
</feature>
<feature type="glycosylation site" description="N-linked (GlcNAc...) asparagine" evidence="4">
    <location>
        <position position="412"/>
    </location>
</feature>
<feature type="glycosylation site" description="N-linked (GlcNAc...) asparagine" evidence="4">
    <location>
        <position position="496"/>
    </location>
</feature>
<feature type="glycosylation site" description="N-linked (GlcNAc...) asparagine" evidence="4">
    <location>
        <position position="508"/>
    </location>
</feature>
<feature type="glycosylation site" description="N-linked (GlcNAc...) asparagine" evidence="4">
    <location>
        <position position="588"/>
    </location>
</feature>
<feature type="glycosylation site" description="N-linked (GlcNAc...) asparagine" evidence="4">
    <location>
        <position position="599"/>
    </location>
</feature>
<feature type="glycosylation site" description="N-linked (GlcNAc...) asparagine" evidence="4">
    <location>
        <position position="664"/>
    </location>
</feature>
<feature type="glycosylation site" description="N-linked (GlcNAc...) asparagine" evidence="4">
    <location>
        <position position="703"/>
    </location>
</feature>
<feature type="disulfide bond" evidence="2">
    <location>
        <begin position="619"/>
        <end position="675"/>
    </location>
</feature>
<feature type="disulfide bond" evidence="2">
    <location>
        <begin position="721"/>
        <end position="765"/>
    </location>
</feature>
<gene>
    <name evidence="8" type="primary">ver-4</name>
    <name evidence="8" type="ORF">F59F3.5</name>
</gene>
<proteinExistence type="inferred from homology"/>
<sequence length="1216" mass="140906">MRVSLTEFLVLAQVVTTLQPITIKVDFHEVKHHESIGDYVELVEGKNRDISLTCYGQHKNLKIEPPKREEHAGFPEIGIRTSAEWKKNEYWFLLKNVRQCDTGSYYCVSDEFKESMLQNTVHIFVRKLDIFVPLKTIYHEHNGSEIIIPCKTTKFVDTKNVELYVNQVKLNSALQGYDQRYGFKLTKNMYTMKPNSTVFFECKYTNDSNQDLDYYISNSDPDATLIDQYFFYWEKSNDVPYVGNNYSITCHLVYIGSDSLRPLNHQEIVLECPQNQCDGGYNNQSAHEIEKRSSGLRFGDPSSQDIVEKNTMLRYDRLSVYDRKTSRTVNFQNLTSEDSGIYRCTWRNRSKTNIVLDYDLNFNQKGTQIKIIETSKQRLKMRKNESTLLFVKFAVFPINKKNYTAKWSRLYNSTVEGGQQVETIRNGFFRQITTKTSGRNVFLETLNLKSPKIEMSGIYVLSISNMDIVQQVKWIIEVENDEPNAQLTIRDPLTLNISNQLFLPLNTNLSIFCLAVSSSPTDVIFEYRTDENEWFRGFYKNKLRKIDDTFEKGFIYNFVLAKRTDFKCINVKKKKTSTKFITVTSNANKTFHEIEKSVNATKTEPSDIIFEGDNVRLTCVVPYGAVEFDVFWKFENPKMLKYTTFPAMHPVKDRYKRVILNVRNITIDFTGTYYCIVKNKEFEHRFETSISVEKVSPPFLLNNNSRSIISASNGQMFDINCKVNGVPTPDYTWFKDGYPYTKGKVIGNALHVSKAEKRDNGIFWCSATNRAGTTIDYIEVKVAGASSSSFFWLFITFFAFVVVGIVVSLLWKLFGQKDLKPSELSLNNLKRATDEYQKYTVSEKINNLPVEERIDYLTYNEDYEIDLENLEILETLGSGQFGIVKKGYLNMASSKNFGFESRLSVAIKSSTDSSNMELQKMFFEELKLMCAIPKHPNVLSLVGAVTKNMEIGELFIVTELIDGGNLREFLRERRDVFANELVEKGYIFLTNVRENVPKREVEKEQLLIDEFNSLCTSDLLSIGLQIANGMDWLANIPCVHRDLACRNVLISKTKIIRIADFGLAKKHTDKAYYRVRESLDTPLPVRWMPLESITDLTFTQKSDVWSYGICLYEIFTLGGTPYPDCPNFSLVEYIKTGNINKRPSNCHKDVYKIMKMCWQASPDDRPTFAECIKLFKNHIQYFASKLLQQIEKDLECEKNNQQKFHYWVQKPTQLFF</sequence>
<protein>
    <recommendedName>
        <fullName evidence="6">Tyrosine-protein kinase receptor ver-4</fullName>
        <ecNumber>2.7.10.1</ecNumber>
    </recommendedName>
    <alternativeName>
        <fullName evidence="6">Vascular endothelial growth factor receptor related 4</fullName>
    </alternativeName>
</protein>
<name>VER4_CAEEL</name>
<keyword id="KW-0067">ATP-binding</keyword>
<keyword id="KW-1003">Cell membrane</keyword>
<keyword id="KW-1015">Disulfide bond</keyword>
<keyword id="KW-0325">Glycoprotein</keyword>
<keyword id="KW-0393">Immunoglobulin domain</keyword>
<keyword id="KW-0418">Kinase</keyword>
<keyword id="KW-0472">Membrane</keyword>
<keyword id="KW-0547">Nucleotide-binding</keyword>
<keyword id="KW-0675">Receptor</keyword>
<keyword id="KW-1185">Reference proteome</keyword>
<keyword id="KW-0677">Repeat</keyword>
<keyword id="KW-0808">Transferase</keyword>
<keyword id="KW-0812">Transmembrane</keyword>
<keyword id="KW-1133">Transmembrane helix</keyword>
<keyword id="KW-0829">Tyrosine-protein kinase</keyword>
<accession>Q21041</accession>
<dbReference type="EC" id="2.7.10.1"/>
<dbReference type="EMBL" id="BX284606">
    <property type="protein sequence ID" value="CAA91991.2"/>
    <property type="molecule type" value="Genomic_DNA"/>
</dbReference>
<dbReference type="RefSeq" id="NP_509835.2">
    <property type="nucleotide sequence ID" value="NM_077434.4"/>
</dbReference>
<dbReference type="SMR" id="Q21041"/>
<dbReference type="FunCoup" id="Q21041">
    <property type="interactions" value="1842"/>
</dbReference>
<dbReference type="STRING" id="6239.F59F3.5.2"/>
<dbReference type="GlyCosmos" id="Q21041">
    <property type="glycosylation" value="16 sites, No reported glycans"/>
</dbReference>
<dbReference type="PaxDb" id="6239-F59F3.5"/>
<dbReference type="PeptideAtlas" id="Q21041"/>
<dbReference type="EnsemblMetazoa" id="F59F3.5.1">
    <property type="protein sequence ID" value="F59F3.5.1"/>
    <property type="gene ID" value="WBGene00006897"/>
</dbReference>
<dbReference type="EnsemblMetazoa" id="F59F3.5.2">
    <property type="protein sequence ID" value="F59F3.5.2"/>
    <property type="gene ID" value="WBGene00006897"/>
</dbReference>
<dbReference type="GeneID" id="186632"/>
<dbReference type="KEGG" id="cel:CELE_F59F3.5"/>
<dbReference type="UCSC" id="F59F3.5">
    <property type="organism name" value="c. elegans"/>
</dbReference>
<dbReference type="AGR" id="WB:WBGene00006897"/>
<dbReference type="CTD" id="186632"/>
<dbReference type="WormBase" id="F59F3.5">
    <property type="protein sequence ID" value="CE43265"/>
    <property type="gene ID" value="WBGene00006897"/>
    <property type="gene designation" value="ver-4"/>
</dbReference>
<dbReference type="eggNOG" id="KOG0200">
    <property type="taxonomic scope" value="Eukaryota"/>
</dbReference>
<dbReference type="GeneTree" id="ENSGT00970000195899"/>
<dbReference type="HOGENOM" id="CLU_260533_0_0_1"/>
<dbReference type="InParanoid" id="Q21041"/>
<dbReference type="OrthoDB" id="5912975at2759"/>
<dbReference type="PhylomeDB" id="Q21041"/>
<dbReference type="PRO" id="PR:Q21041"/>
<dbReference type="Proteomes" id="UP000001940">
    <property type="component" value="Chromosome X"/>
</dbReference>
<dbReference type="Bgee" id="WBGene00006897">
    <property type="expression patterns" value="Expressed in embryo and 2 other cell types or tissues"/>
</dbReference>
<dbReference type="GO" id="GO:0005886">
    <property type="term" value="C:plasma membrane"/>
    <property type="evidence" value="ECO:0000318"/>
    <property type="project" value="GO_Central"/>
</dbReference>
<dbReference type="GO" id="GO:0043235">
    <property type="term" value="C:receptor complex"/>
    <property type="evidence" value="ECO:0000318"/>
    <property type="project" value="GO_Central"/>
</dbReference>
<dbReference type="GO" id="GO:0005524">
    <property type="term" value="F:ATP binding"/>
    <property type="evidence" value="ECO:0007669"/>
    <property type="project" value="UniProtKB-KW"/>
</dbReference>
<dbReference type="GO" id="GO:0004714">
    <property type="term" value="F:transmembrane receptor protein tyrosine kinase activity"/>
    <property type="evidence" value="ECO:0000318"/>
    <property type="project" value="GO_Central"/>
</dbReference>
<dbReference type="GO" id="GO:0007169">
    <property type="term" value="P:cell surface receptor protein tyrosine kinase signaling pathway"/>
    <property type="evidence" value="ECO:0000318"/>
    <property type="project" value="GO_Central"/>
</dbReference>
<dbReference type="GO" id="GO:0045138">
    <property type="term" value="P:nematode male tail tip morphogenesis"/>
    <property type="evidence" value="ECO:0000316"/>
    <property type="project" value="WormBase"/>
</dbReference>
<dbReference type="CDD" id="cd00096">
    <property type="entry name" value="Ig"/>
    <property type="match status" value="1"/>
</dbReference>
<dbReference type="CDD" id="cd00192">
    <property type="entry name" value="PTKc"/>
    <property type="match status" value="1"/>
</dbReference>
<dbReference type="FunFam" id="2.60.40.10:FF:003788">
    <property type="match status" value="1"/>
</dbReference>
<dbReference type="FunFam" id="1.10.510.10:FF:000554">
    <property type="entry name" value="Predicted protein"/>
    <property type="match status" value="1"/>
</dbReference>
<dbReference type="FunFam" id="3.30.200.20:FF:000586">
    <property type="entry name" value="Receptor protein-tyrosine kinase"/>
    <property type="match status" value="1"/>
</dbReference>
<dbReference type="Gene3D" id="2.60.40.10">
    <property type="entry name" value="Immunoglobulins"/>
    <property type="match status" value="3"/>
</dbReference>
<dbReference type="Gene3D" id="3.30.200.20">
    <property type="entry name" value="Phosphorylase Kinase, domain 1"/>
    <property type="match status" value="1"/>
</dbReference>
<dbReference type="Gene3D" id="1.10.510.10">
    <property type="entry name" value="Transferase(Phosphotransferase) domain 1"/>
    <property type="match status" value="1"/>
</dbReference>
<dbReference type="InterPro" id="IPR007110">
    <property type="entry name" value="Ig-like_dom"/>
</dbReference>
<dbReference type="InterPro" id="IPR036179">
    <property type="entry name" value="Ig-like_dom_sf"/>
</dbReference>
<dbReference type="InterPro" id="IPR013783">
    <property type="entry name" value="Ig-like_fold"/>
</dbReference>
<dbReference type="InterPro" id="IPR003599">
    <property type="entry name" value="Ig_sub"/>
</dbReference>
<dbReference type="InterPro" id="IPR003598">
    <property type="entry name" value="Ig_sub2"/>
</dbReference>
<dbReference type="InterPro" id="IPR011009">
    <property type="entry name" value="Kinase-like_dom_sf"/>
</dbReference>
<dbReference type="InterPro" id="IPR000719">
    <property type="entry name" value="Prot_kinase_dom"/>
</dbReference>
<dbReference type="InterPro" id="IPR017441">
    <property type="entry name" value="Protein_kinase_ATP_BS"/>
</dbReference>
<dbReference type="InterPro" id="IPR050122">
    <property type="entry name" value="RTK"/>
</dbReference>
<dbReference type="InterPro" id="IPR001245">
    <property type="entry name" value="Ser-Thr/Tyr_kinase_cat_dom"/>
</dbReference>
<dbReference type="InterPro" id="IPR008266">
    <property type="entry name" value="Tyr_kinase_AS"/>
</dbReference>
<dbReference type="InterPro" id="IPR020635">
    <property type="entry name" value="Tyr_kinase_cat_dom"/>
</dbReference>
<dbReference type="PANTHER" id="PTHR24416:SF602">
    <property type="entry name" value="PROTEIN VER-1-RELATED"/>
    <property type="match status" value="1"/>
</dbReference>
<dbReference type="PANTHER" id="PTHR24416">
    <property type="entry name" value="TYROSINE-PROTEIN KINASE RECEPTOR"/>
    <property type="match status" value="1"/>
</dbReference>
<dbReference type="Pfam" id="PF13927">
    <property type="entry name" value="Ig_3"/>
    <property type="match status" value="1"/>
</dbReference>
<dbReference type="Pfam" id="PF07714">
    <property type="entry name" value="PK_Tyr_Ser-Thr"/>
    <property type="match status" value="1"/>
</dbReference>
<dbReference type="PIRSF" id="PIRSF000615">
    <property type="entry name" value="TyrPK_CSF1-R"/>
    <property type="match status" value="1"/>
</dbReference>
<dbReference type="PRINTS" id="PR00109">
    <property type="entry name" value="TYRKINASE"/>
</dbReference>
<dbReference type="SMART" id="SM00409">
    <property type="entry name" value="IG"/>
    <property type="match status" value="4"/>
</dbReference>
<dbReference type="SMART" id="SM00408">
    <property type="entry name" value="IGc2"/>
    <property type="match status" value="3"/>
</dbReference>
<dbReference type="SMART" id="SM00219">
    <property type="entry name" value="TyrKc"/>
    <property type="match status" value="1"/>
</dbReference>
<dbReference type="SUPFAM" id="SSF48726">
    <property type="entry name" value="Immunoglobulin"/>
    <property type="match status" value="3"/>
</dbReference>
<dbReference type="SUPFAM" id="SSF56112">
    <property type="entry name" value="Protein kinase-like (PK-like)"/>
    <property type="match status" value="1"/>
</dbReference>
<dbReference type="PROSITE" id="PS50835">
    <property type="entry name" value="IG_LIKE"/>
    <property type="match status" value="2"/>
</dbReference>
<dbReference type="PROSITE" id="PS00107">
    <property type="entry name" value="PROTEIN_KINASE_ATP"/>
    <property type="match status" value="1"/>
</dbReference>
<dbReference type="PROSITE" id="PS50011">
    <property type="entry name" value="PROTEIN_KINASE_DOM"/>
    <property type="match status" value="1"/>
</dbReference>
<dbReference type="PROSITE" id="PS00109">
    <property type="entry name" value="PROTEIN_KINASE_TYR"/>
    <property type="match status" value="1"/>
</dbReference>